<evidence type="ECO:0000255" key="1">
    <source>
        <dbReference type="HAMAP-Rule" id="MF_00251"/>
    </source>
</evidence>
<evidence type="ECO:0000305" key="2"/>
<evidence type="ECO:0007829" key="3">
    <source>
        <dbReference type="PDB" id="8FN2"/>
    </source>
</evidence>
<feature type="chain" id="PRO_0000126154" description="Large ribosomal subunit protein bL36">
    <location>
        <begin position="1"/>
        <end position="37"/>
    </location>
</feature>
<feature type="strand" evidence="3">
    <location>
        <begin position="2"/>
        <end position="6"/>
    </location>
</feature>
<feature type="strand" evidence="3">
    <location>
        <begin position="15"/>
        <end position="19"/>
    </location>
</feature>
<feature type="strand" evidence="3">
    <location>
        <begin position="22"/>
        <end position="26"/>
    </location>
</feature>
<feature type="helix" evidence="3">
    <location>
        <begin position="30"/>
        <end position="32"/>
    </location>
</feature>
<feature type="strand" evidence="3">
    <location>
        <begin position="34"/>
        <end position="36"/>
    </location>
</feature>
<protein>
    <recommendedName>
        <fullName evidence="1">Large ribosomal subunit protein bL36</fullName>
    </recommendedName>
    <alternativeName>
        <fullName evidence="2">50S ribosomal protein L36</fullName>
    </alternativeName>
</protein>
<name>RL36_BORBU</name>
<dbReference type="EMBL" id="AE000783">
    <property type="protein sequence ID" value="AAC66843.1"/>
    <property type="status" value="ALT_INIT"/>
    <property type="molecule type" value="Genomic_DNA"/>
</dbReference>
<dbReference type="PIR" id="B70162">
    <property type="entry name" value="B70162"/>
</dbReference>
<dbReference type="RefSeq" id="NP_212633.1">
    <property type="nucleotide sequence ID" value="NC_001318.1"/>
</dbReference>
<dbReference type="RefSeq" id="WP_002557090.1">
    <property type="nucleotide sequence ID" value="NC_001318.1"/>
</dbReference>
<dbReference type="PDB" id="8FMW">
    <property type="method" value="EM"/>
    <property type="resolution" value="2.86 A"/>
    <property type="chains" value="Ah=1-37"/>
</dbReference>
<dbReference type="PDB" id="8FN2">
    <property type="method" value="EM"/>
    <property type="resolution" value="3.40 A"/>
    <property type="chains" value="h=1-37"/>
</dbReference>
<dbReference type="PDBsum" id="8FMW"/>
<dbReference type="PDBsum" id="8FN2"/>
<dbReference type="EMDB" id="EMD-29298"/>
<dbReference type="EMDB" id="EMD-29304"/>
<dbReference type="SMR" id="O51452"/>
<dbReference type="STRING" id="224326.BB_0499"/>
<dbReference type="PaxDb" id="224326-BB_0499"/>
<dbReference type="EnsemblBacteria" id="AAC66843">
    <property type="protein sequence ID" value="AAC66843"/>
    <property type="gene ID" value="BB_0499"/>
</dbReference>
<dbReference type="GeneID" id="71843317"/>
<dbReference type="KEGG" id="bbu:BB_0499"/>
<dbReference type="PATRIC" id="fig|224326.49.peg.890"/>
<dbReference type="HOGENOM" id="CLU_135723_6_2_12"/>
<dbReference type="OrthoDB" id="9802520at2"/>
<dbReference type="Proteomes" id="UP000001807">
    <property type="component" value="Chromosome"/>
</dbReference>
<dbReference type="GO" id="GO:0005737">
    <property type="term" value="C:cytoplasm"/>
    <property type="evidence" value="ECO:0007669"/>
    <property type="project" value="UniProtKB-ARBA"/>
</dbReference>
<dbReference type="GO" id="GO:1990904">
    <property type="term" value="C:ribonucleoprotein complex"/>
    <property type="evidence" value="ECO:0007669"/>
    <property type="project" value="UniProtKB-KW"/>
</dbReference>
<dbReference type="GO" id="GO:0005840">
    <property type="term" value="C:ribosome"/>
    <property type="evidence" value="ECO:0007669"/>
    <property type="project" value="UniProtKB-KW"/>
</dbReference>
<dbReference type="GO" id="GO:0003735">
    <property type="term" value="F:structural constituent of ribosome"/>
    <property type="evidence" value="ECO:0007669"/>
    <property type="project" value="InterPro"/>
</dbReference>
<dbReference type="GO" id="GO:0006412">
    <property type="term" value="P:translation"/>
    <property type="evidence" value="ECO:0007669"/>
    <property type="project" value="UniProtKB-UniRule"/>
</dbReference>
<dbReference type="HAMAP" id="MF_00251">
    <property type="entry name" value="Ribosomal_bL36"/>
    <property type="match status" value="1"/>
</dbReference>
<dbReference type="InterPro" id="IPR000473">
    <property type="entry name" value="Ribosomal_bL36"/>
</dbReference>
<dbReference type="InterPro" id="IPR035977">
    <property type="entry name" value="Ribosomal_bL36_sp"/>
</dbReference>
<dbReference type="NCBIfam" id="TIGR01022">
    <property type="entry name" value="rpmJ_bact"/>
    <property type="match status" value="1"/>
</dbReference>
<dbReference type="PANTHER" id="PTHR42888">
    <property type="entry name" value="50S RIBOSOMAL PROTEIN L36, CHLOROPLASTIC"/>
    <property type="match status" value="1"/>
</dbReference>
<dbReference type="PANTHER" id="PTHR42888:SF1">
    <property type="entry name" value="LARGE RIBOSOMAL SUBUNIT PROTEIN BL36C"/>
    <property type="match status" value="1"/>
</dbReference>
<dbReference type="Pfam" id="PF00444">
    <property type="entry name" value="Ribosomal_L36"/>
    <property type="match status" value="1"/>
</dbReference>
<dbReference type="SUPFAM" id="SSF57840">
    <property type="entry name" value="Ribosomal protein L36"/>
    <property type="match status" value="1"/>
</dbReference>
<dbReference type="PROSITE" id="PS00828">
    <property type="entry name" value="RIBOSOMAL_L36"/>
    <property type="match status" value="1"/>
</dbReference>
<sequence length="37" mass="4405">MKVRVSVKPICEKCKVIKRKGVLRIICDNLKHKQRQK</sequence>
<reference key="1">
    <citation type="journal article" date="1997" name="Nature">
        <title>Genomic sequence of a Lyme disease spirochaete, Borrelia burgdorferi.</title>
        <authorList>
            <person name="Fraser C.M."/>
            <person name="Casjens S."/>
            <person name="Huang W.M."/>
            <person name="Sutton G.G."/>
            <person name="Clayton R.A."/>
            <person name="Lathigra R."/>
            <person name="White O."/>
            <person name="Ketchum K.A."/>
            <person name="Dodson R.J."/>
            <person name="Hickey E.K."/>
            <person name="Gwinn M.L."/>
            <person name="Dougherty B.A."/>
            <person name="Tomb J.-F."/>
            <person name="Fleischmann R.D."/>
            <person name="Richardson D.L."/>
            <person name="Peterson J.D."/>
            <person name="Kerlavage A.R."/>
            <person name="Quackenbush J."/>
            <person name="Salzberg S.L."/>
            <person name="Hanson M."/>
            <person name="van Vugt R."/>
            <person name="Palmer N."/>
            <person name="Adams M.D."/>
            <person name="Gocayne J.D."/>
            <person name="Weidman J.F."/>
            <person name="Utterback T.R."/>
            <person name="Watthey L."/>
            <person name="McDonald L.A."/>
            <person name="Artiach P."/>
            <person name="Bowman C."/>
            <person name="Garland S.A."/>
            <person name="Fujii C."/>
            <person name="Cotton M.D."/>
            <person name="Horst K."/>
            <person name="Roberts K.M."/>
            <person name="Hatch B."/>
            <person name="Smith H.O."/>
            <person name="Venter J.C."/>
        </authorList>
    </citation>
    <scope>NUCLEOTIDE SEQUENCE [LARGE SCALE GENOMIC DNA]</scope>
    <source>
        <strain>ATCC 35210 / DSM 4680 / CIP 102532 / B31</strain>
    </source>
</reference>
<gene>
    <name evidence="1" type="primary">rpmJ</name>
    <name type="ordered locus">BB_0499</name>
</gene>
<keyword id="KW-0002">3D-structure</keyword>
<keyword id="KW-1185">Reference proteome</keyword>
<keyword id="KW-0687">Ribonucleoprotein</keyword>
<keyword id="KW-0689">Ribosomal protein</keyword>
<proteinExistence type="evidence at protein level"/>
<comment type="similarity">
    <text evidence="1">Belongs to the bacterial ribosomal protein bL36 family.</text>
</comment>
<comment type="sequence caution" evidence="2">
    <conflict type="erroneous initiation">
        <sequence resource="EMBL-CDS" id="AAC66843"/>
    </conflict>
</comment>
<organism>
    <name type="scientific">Borreliella burgdorferi (strain ATCC 35210 / DSM 4680 / CIP 102532 / B31)</name>
    <name type="common">Borrelia burgdorferi</name>
    <dbReference type="NCBI Taxonomy" id="224326"/>
    <lineage>
        <taxon>Bacteria</taxon>
        <taxon>Pseudomonadati</taxon>
        <taxon>Spirochaetota</taxon>
        <taxon>Spirochaetia</taxon>
        <taxon>Spirochaetales</taxon>
        <taxon>Borreliaceae</taxon>
        <taxon>Borreliella</taxon>
    </lineage>
</organism>
<accession>O51452</accession>